<keyword id="KW-0106">Calcium</keyword>
<keyword id="KW-0119">Carbohydrate metabolism</keyword>
<keyword id="KW-0868">Chloride</keyword>
<keyword id="KW-1015">Disulfide bond</keyword>
<keyword id="KW-0325">Glycoprotein</keyword>
<keyword id="KW-0326">Glycosidase</keyword>
<keyword id="KW-0378">Hydrolase</keyword>
<keyword id="KW-0479">Metal-binding</keyword>
<keyword id="KW-0873">Pyrrolidone carboxylic acid</keyword>
<keyword id="KW-0732">Signal</keyword>
<evidence type="ECO:0000250" key="1">
    <source>
        <dbReference type="UniProtKB" id="P04746"/>
    </source>
</evidence>
<evidence type="ECO:0000250" key="2">
    <source>
        <dbReference type="UniProtKB" id="P56634"/>
    </source>
</evidence>
<evidence type="ECO:0000255" key="3"/>
<evidence type="ECO:0000255" key="4">
    <source>
        <dbReference type="PROSITE-ProRule" id="PRU00498"/>
    </source>
</evidence>
<evidence type="ECO:0000255" key="5">
    <source>
        <dbReference type="RuleBase" id="RU003615"/>
    </source>
</evidence>
<evidence type="ECO:0000255" key="6">
    <source>
        <dbReference type="RuleBase" id="RU361134"/>
    </source>
</evidence>
<evidence type="ECO:0000269" key="7">
    <source>
    </source>
</evidence>
<evidence type="ECO:0000303" key="8">
    <source>
    </source>
</evidence>
<evidence type="ECO:0000305" key="9">
    <source>
    </source>
</evidence>
<evidence type="ECO:0000312" key="10">
    <source>
        <dbReference type="EMBL" id="AHY03307.1"/>
    </source>
</evidence>
<sequence length="485" mass="53124">MQHLSILLVVLGSSIAFAQHDPHFADGRNTIVHLFGWKWGDIASECENWLRKKGFAGVQISPPSENPIVSGRPWWENYQPVSYDLKNRNGDEDSLSDMIKRCNNVGVRIYADLVVNHMATSIGQGTADHSYDPGSKSYPAVPYSNENFHASCDIDYNDAASIRNCELSGLKDLDQSQDYVRGKIVDYMNHLVSLGVAGFRVDAAKHMWPADLAAIFGSVNDLNTDFFPSGSRAYIYQEVIDTGSDPIDNKDYTGFGSVCEFKYGIQLATCFRGSNPLKYLENWGTGWGLLDGGNTLVFIDNHDTERSSGSYLNYKESRAYKAANAFMLAHPYDGITKIMSSYDFSDNDQSPPSDGDNILSPGFKEDGTCTNGWICQHRWSPIFNMVEFRSVVSGIELTNWWSGGDYQIAFSRGTKGTIAISINDSLDSDVPTGLPDGTYCDVISGSLSNGSCTGKSITVSGGKAHISIASDDREAAVAIHANAKL</sequence>
<comment type="function">
    <text evidence="9">Involved in the digestion of starch (Probable).</text>
</comment>
<comment type="catalytic activity">
    <reaction evidence="6">
        <text>Endohydrolysis of (1-&gt;4)-alpha-D-glucosidic linkages in polysaccharides containing three or more (1-&gt;4)-alpha-linked D-glucose units.</text>
        <dbReference type="EC" id="3.2.1.1"/>
    </reaction>
</comment>
<comment type="cofactor">
    <cofactor evidence="2">
        <name>Ca(2+)</name>
        <dbReference type="ChEBI" id="CHEBI:29108"/>
    </cofactor>
    <text evidence="2">Binds 1 Ca(2+) ion per subunit.</text>
</comment>
<comment type="cofactor">
    <cofactor evidence="2">
        <name>chloride</name>
        <dbReference type="ChEBI" id="CHEBI:17996"/>
    </cofactor>
    <text evidence="2">Binds 1 Cl(-) ion per subunit.</text>
</comment>
<comment type="subunit">
    <text evidence="2">Monomer.</text>
</comment>
<comment type="developmental stage">
    <text evidence="7">Highly expressed in L2 larvae and adult insect stages, which are the main feeding phases. Low levels are detected in eggs and first instar (L1) stage, whereas a 200-fold increase is observed at the second instar (L2) stage. Expression is significantly reduced during the pupal stage, a period in which the insects do not feed. After ecdysis, the expression increases again 200-fold during the adult stage along with the resumed feeding.</text>
</comment>
<comment type="biotechnology">
    <text evidence="8">A possible target of coffee bean insect pest control. This important digestive enzyme could be for example knocked down using the RNAi method.</text>
</comment>
<comment type="similarity">
    <text evidence="5">Belongs to the glycosyl hydrolase 13 family.</text>
</comment>
<proteinExistence type="evidence at transcript level"/>
<reference evidence="10" key="1">
    <citation type="journal article" date="2014" name="Gene">
        <title>Molecular cloning and characterization of an alpha-amylase cDNA highly expressed in major feeding stages of the coffee berry borer, Hypothenemus hampei.</title>
        <authorList>
            <person name="Bezerra C.A."/>
            <person name="Macedo L.L."/>
            <person name="Amorim T.M."/>
            <person name="Santos V.O."/>
            <person name="Fragoso R.R."/>
            <person name="Lucena W.A."/>
            <person name="Meneguim A.M."/>
            <person name="Valencia-Jimenez A."/>
            <person name="Engler G."/>
            <person name="Silva M.C."/>
            <person name="Albuquerque E.V."/>
            <person name="Grossi-de-Sa M.F."/>
        </authorList>
    </citation>
    <scope>NUCLEOTIDE SEQUENCE [MRNA]</scope>
    <scope>DEVELOPMENTAL STAGE</scope>
    <scope>BIOTECHNOLOGY</scope>
    <scope>3D-STRUCTURE MODELING</scope>
</reference>
<accession>A0A096XJN4</accession>
<name>AMY_HYPHA</name>
<dbReference type="EC" id="3.2.1.1" evidence="3 6"/>
<dbReference type="EMBL" id="KF963103">
    <property type="protein sequence ID" value="AHY03307.1"/>
    <property type="molecule type" value="mRNA"/>
</dbReference>
<dbReference type="SMR" id="A0A096XJN4"/>
<dbReference type="GlyCosmos" id="A0A096XJN4">
    <property type="glycosylation" value="2 sites, No reported glycans"/>
</dbReference>
<dbReference type="GO" id="GO:0004556">
    <property type="term" value="F:alpha-amylase activity"/>
    <property type="evidence" value="ECO:0007669"/>
    <property type="project" value="UniProtKB-EC"/>
</dbReference>
<dbReference type="GO" id="GO:0005509">
    <property type="term" value="F:calcium ion binding"/>
    <property type="evidence" value="ECO:0000250"/>
    <property type="project" value="UniProtKB"/>
</dbReference>
<dbReference type="GO" id="GO:0031404">
    <property type="term" value="F:chloride ion binding"/>
    <property type="evidence" value="ECO:0000250"/>
    <property type="project" value="UniProtKB"/>
</dbReference>
<dbReference type="GO" id="GO:0005983">
    <property type="term" value="P:starch catabolic process"/>
    <property type="evidence" value="ECO:0000270"/>
    <property type="project" value="UniProtKB"/>
</dbReference>
<dbReference type="CDD" id="cd11317">
    <property type="entry name" value="AmyAc_bac_euk_AmyA"/>
    <property type="match status" value="1"/>
</dbReference>
<dbReference type="Gene3D" id="3.20.20.80">
    <property type="entry name" value="Glycosidases"/>
    <property type="match status" value="1"/>
</dbReference>
<dbReference type="Gene3D" id="2.60.40.1180">
    <property type="entry name" value="Golgi alpha-mannosidase II"/>
    <property type="match status" value="1"/>
</dbReference>
<dbReference type="InterPro" id="IPR006048">
    <property type="entry name" value="A-amylase/branching_C"/>
</dbReference>
<dbReference type="InterPro" id="IPR031319">
    <property type="entry name" value="A-amylase_C"/>
</dbReference>
<dbReference type="InterPro" id="IPR006046">
    <property type="entry name" value="Alpha_amylase"/>
</dbReference>
<dbReference type="InterPro" id="IPR006047">
    <property type="entry name" value="Glyco_hydro_13_cat_dom"/>
</dbReference>
<dbReference type="InterPro" id="IPR013780">
    <property type="entry name" value="Glyco_hydro_b"/>
</dbReference>
<dbReference type="InterPro" id="IPR017853">
    <property type="entry name" value="Glycoside_hydrolase_SF"/>
</dbReference>
<dbReference type="PANTHER" id="PTHR43447">
    <property type="entry name" value="ALPHA-AMYLASE"/>
    <property type="match status" value="1"/>
</dbReference>
<dbReference type="Pfam" id="PF00128">
    <property type="entry name" value="Alpha-amylase"/>
    <property type="match status" value="1"/>
</dbReference>
<dbReference type="Pfam" id="PF02806">
    <property type="entry name" value="Alpha-amylase_C"/>
    <property type="match status" value="1"/>
</dbReference>
<dbReference type="PRINTS" id="PR00110">
    <property type="entry name" value="ALPHAAMYLASE"/>
</dbReference>
<dbReference type="SMART" id="SM00642">
    <property type="entry name" value="Aamy"/>
    <property type="match status" value="1"/>
</dbReference>
<dbReference type="SMART" id="SM00632">
    <property type="entry name" value="Aamy_C"/>
    <property type="match status" value="1"/>
</dbReference>
<dbReference type="SUPFAM" id="SSF51445">
    <property type="entry name" value="(Trans)glycosidases"/>
    <property type="match status" value="1"/>
</dbReference>
<dbReference type="SUPFAM" id="SSF51011">
    <property type="entry name" value="Glycosyl hydrolase domain"/>
    <property type="match status" value="1"/>
</dbReference>
<feature type="signal peptide" evidence="3">
    <location>
        <begin position="1"/>
        <end position="18"/>
    </location>
</feature>
<feature type="chain" id="PRO_5001926807" description="Alpha-amylase" evidence="3">
    <location>
        <begin position="19"/>
        <end position="485"/>
    </location>
</feature>
<feature type="active site" description="Nucleophile" evidence="2">
    <location>
        <position position="202"/>
    </location>
</feature>
<feature type="active site" description="Proton donor" evidence="2">
    <location>
        <position position="238"/>
    </location>
</feature>
<feature type="binding site" evidence="2">
    <location>
        <position position="116"/>
    </location>
    <ligand>
        <name>Ca(2+)</name>
        <dbReference type="ChEBI" id="CHEBI:29108"/>
    </ligand>
</feature>
<feature type="binding site" evidence="2">
    <location>
        <position position="163"/>
    </location>
    <ligand>
        <name>Ca(2+)</name>
        <dbReference type="ChEBI" id="CHEBI:29108"/>
    </ligand>
</feature>
<feature type="binding site" evidence="2">
    <location>
        <position position="172"/>
    </location>
    <ligand>
        <name>Ca(2+)</name>
        <dbReference type="ChEBI" id="CHEBI:29108"/>
    </ligand>
</feature>
<feature type="binding site" evidence="2">
    <location>
        <position position="200"/>
    </location>
    <ligand>
        <name>chloride</name>
        <dbReference type="ChEBI" id="CHEBI:17996"/>
    </ligand>
</feature>
<feature type="binding site" evidence="2">
    <location>
        <position position="206"/>
    </location>
    <ligand>
        <name>Ca(2+)</name>
        <dbReference type="ChEBI" id="CHEBI:29108"/>
    </ligand>
</feature>
<feature type="binding site" evidence="2">
    <location>
        <position position="301"/>
    </location>
    <ligand>
        <name>chloride</name>
        <dbReference type="ChEBI" id="CHEBI:17996"/>
    </ligand>
</feature>
<feature type="site" description="Transition state stabilizer" evidence="1">
    <location>
        <position position="303"/>
    </location>
</feature>
<feature type="modified residue" description="Pyrrolidone carboxylic acid" evidence="2">
    <location>
        <position position="19"/>
    </location>
</feature>
<feature type="glycosylation site" description="N-linked (GlcNAc...) asparagine" evidence="4">
    <location>
        <position position="423"/>
    </location>
</feature>
<feature type="glycosylation site" description="N-linked (GlcNAc...) asparagine" evidence="4">
    <location>
        <position position="449"/>
    </location>
</feature>
<feature type="disulfide bond" evidence="2">
    <location>
        <begin position="46"/>
        <end position="102"/>
    </location>
</feature>
<feature type="disulfide bond" evidence="2">
    <location>
        <begin position="152"/>
        <end position="165"/>
    </location>
</feature>
<feature type="disulfide bond" evidence="2">
    <location>
        <begin position="369"/>
        <end position="375"/>
    </location>
</feature>
<feature type="disulfide bond" evidence="2">
    <location>
        <begin position="440"/>
        <end position="452"/>
    </location>
</feature>
<organism evidence="10">
    <name type="scientific">Hypothenemus hampei</name>
    <name type="common">Coffee berry borer</name>
    <dbReference type="NCBI Taxonomy" id="57062"/>
    <lineage>
        <taxon>Eukaryota</taxon>
        <taxon>Metazoa</taxon>
        <taxon>Ecdysozoa</taxon>
        <taxon>Arthropoda</taxon>
        <taxon>Hexapoda</taxon>
        <taxon>Insecta</taxon>
        <taxon>Pterygota</taxon>
        <taxon>Neoptera</taxon>
        <taxon>Endopterygota</taxon>
        <taxon>Coleoptera</taxon>
        <taxon>Polyphaga</taxon>
        <taxon>Cucujiformia</taxon>
        <taxon>Curculionidae</taxon>
        <taxon>Scolytinae</taxon>
        <taxon>Hypothenemus</taxon>
    </lineage>
</organism>
<protein>
    <recommendedName>
        <fullName evidence="3 6 8">Alpha-amylase</fullName>
        <ecNumber evidence="3 6">3.2.1.1</ecNumber>
    </recommendedName>
    <alternativeName>
        <fullName evidence="8">1,4-alpha-D-glucan glucanohydrolase</fullName>
    </alternativeName>
    <alternativeName>
        <fullName evidence="8">AmyHha</fullName>
    </alternativeName>
</protein>
<gene>
    <name evidence="10" type="primary">Amy</name>
</gene>